<accession>Q1LSF5</accession>
<proteinExistence type="inferred from homology"/>
<sequence length="282" mass="29772">MSQKKSPRFELRSGNVDALLLALNTADLDAVRDDLLSRFESTPDFFSDDVVALDLRRLEGTGALALDRVIDTLATLKARAIGVVARADQRDWAGGFGLPLLDSQSRRGGKDEAPKEKAGKPEATAASGQTDAEAAGNTGKGKDSEGAAVNGKASEIAEIMAAANAASAPRAIPTLLIDKPLRSGQQIYAQGDVVILDLVSYGAEVIAEGNIHIYAPLRGRALAGVKGNPDARIFCTCLEPELISIAGIYRTAEQTLPADVLGKSAQVRLADEKLILEPLRMK</sequence>
<keyword id="KW-0131">Cell cycle</keyword>
<keyword id="KW-0132">Cell division</keyword>
<keyword id="KW-1185">Reference proteome</keyword>
<keyword id="KW-0717">Septation</keyword>
<organism>
    <name type="scientific">Cupriavidus metallidurans (strain ATCC 43123 / DSM 2839 / NBRC 102507 / CH34)</name>
    <name type="common">Ralstonia metallidurans</name>
    <dbReference type="NCBI Taxonomy" id="266264"/>
    <lineage>
        <taxon>Bacteria</taxon>
        <taxon>Pseudomonadati</taxon>
        <taxon>Pseudomonadota</taxon>
        <taxon>Betaproteobacteria</taxon>
        <taxon>Burkholderiales</taxon>
        <taxon>Burkholderiaceae</taxon>
        <taxon>Cupriavidus</taxon>
    </lineage>
</organism>
<feature type="chain" id="PRO_1000047850" description="Probable septum site-determining protein MinC">
    <location>
        <begin position="1"/>
        <end position="282"/>
    </location>
</feature>
<feature type="region of interest" description="Disordered" evidence="2">
    <location>
        <begin position="103"/>
        <end position="147"/>
    </location>
</feature>
<feature type="compositionally biased region" description="Basic and acidic residues" evidence="2">
    <location>
        <begin position="104"/>
        <end position="120"/>
    </location>
</feature>
<evidence type="ECO:0000255" key="1">
    <source>
        <dbReference type="HAMAP-Rule" id="MF_00267"/>
    </source>
</evidence>
<evidence type="ECO:0000256" key="2">
    <source>
        <dbReference type="SAM" id="MobiDB-lite"/>
    </source>
</evidence>
<dbReference type="EMBL" id="CP000352">
    <property type="protein sequence ID" value="ABF06921.1"/>
    <property type="molecule type" value="Genomic_DNA"/>
</dbReference>
<dbReference type="RefSeq" id="WP_011514963.1">
    <property type="nucleotide sequence ID" value="NC_007973.1"/>
</dbReference>
<dbReference type="SMR" id="Q1LSF5"/>
<dbReference type="STRING" id="266264.Rmet_0035"/>
<dbReference type="KEGG" id="rme:Rmet_0035"/>
<dbReference type="eggNOG" id="COG0850">
    <property type="taxonomic scope" value="Bacteria"/>
</dbReference>
<dbReference type="HOGENOM" id="CLU_067812_0_0_4"/>
<dbReference type="Proteomes" id="UP000002429">
    <property type="component" value="Chromosome"/>
</dbReference>
<dbReference type="GO" id="GO:0000902">
    <property type="term" value="P:cell morphogenesis"/>
    <property type="evidence" value="ECO:0007669"/>
    <property type="project" value="InterPro"/>
</dbReference>
<dbReference type="GO" id="GO:0000917">
    <property type="term" value="P:division septum assembly"/>
    <property type="evidence" value="ECO:0007669"/>
    <property type="project" value="UniProtKB-KW"/>
</dbReference>
<dbReference type="GO" id="GO:0051302">
    <property type="term" value="P:regulation of cell division"/>
    <property type="evidence" value="ECO:0007669"/>
    <property type="project" value="InterPro"/>
</dbReference>
<dbReference type="GO" id="GO:1901891">
    <property type="term" value="P:regulation of cell septum assembly"/>
    <property type="evidence" value="ECO:0007669"/>
    <property type="project" value="InterPro"/>
</dbReference>
<dbReference type="Gene3D" id="2.160.20.70">
    <property type="match status" value="1"/>
</dbReference>
<dbReference type="Gene3D" id="3.30.70.260">
    <property type="match status" value="1"/>
</dbReference>
<dbReference type="HAMAP" id="MF_00267">
    <property type="entry name" value="MinC"/>
    <property type="match status" value="1"/>
</dbReference>
<dbReference type="InterPro" id="IPR016098">
    <property type="entry name" value="CAP/MinC_C"/>
</dbReference>
<dbReference type="InterPro" id="IPR013033">
    <property type="entry name" value="MinC"/>
</dbReference>
<dbReference type="InterPro" id="IPR036145">
    <property type="entry name" value="MinC_C_sf"/>
</dbReference>
<dbReference type="InterPro" id="IPR007874">
    <property type="entry name" value="MinC_N"/>
</dbReference>
<dbReference type="InterPro" id="IPR005526">
    <property type="entry name" value="Septum_form_inhib_MinC_C"/>
</dbReference>
<dbReference type="NCBIfam" id="TIGR01222">
    <property type="entry name" value="minC"/>
    <property type="match status" value="1"/>
</dbReference>
<dbReference type="PANTHER" id="PTHR34108">
    <property type="entry name" value="SEPTUM SITE-DETERMINING PROTEIN MINC"/>
    <property type="match status" value="1"/>
</dbReference>
<dbReference type="PANTHER" id="PTHR34108:SF1">
    <property type="entry name" value="SEPTUM SITE-DETERMINING PROTEIN MINC"/>
    <property type="match status" value="1"/>
</dbReference>
<dbReference type="Pfam" id="PF03775">
    <property type="entry name" value="MinC_C"/>
    <property type="match status" value="1"/>
</dbReference>
<dbReference type="Pfam" id="PF05209">
    <property type="entry name" value="MinC_N"/>
    <property type="match status" value="1"/>
</dbReference>
<dbReference type="SUPFAM" id="SSF63848">
    <property type="entry name" value="Cell-division inhibitor MinC, C-terminal domain"/>
    <property type="match status" value="1"/>
</dbReference>
<protein>
    <recommendedName>
        <fullName evidence="1">Probable septum site-determining protein MinC</fullName>
    </recommendedName>
</protein>
<gene>
    <name evidence="1" type="primary">minC</name>
    <name type="ordered locus">Rmet_0035</name>
</gene>
<name>MINC_CUPMC</name>
<reference key="1">
    <citation type="journal article" date="2010" name="PLoS ONE">
        <title>The complete genome sequence of Cupriavidus metallidurans strain CH34, a master survivalist in harsh and anthropogenic environments.</title>
        <authorList>
            <person name="Janssen P.J."/>
            <person name="Van Houdt R."/>
            <person name="Moors H."/>
            <person name="Monsieurs P."/>
            <person name="Morin N."/>
            <person name="Michaux A."/>
            <person name="Benotmane M.A."/>
            <person name="Leys N."/>
            <person name="Vallaeys T."/>
            <person name="Lapidus A."/>
            <person name="Monchy S."/>
            <person name="Medigue C."/>
            <person name="Taghavi S."/>
            <person name="McCorkle S."/>
            <person name="Dunn J."/>
            <person name="van der Lelie D."/>
            <person name="Mergeay M."/>
        </authorList>
    </citation>
    <scope>NUCLEOTIDE SEQUENCE [LARGE SCALE GENOMIC DNA]</scope>
    <source>
        <strain>ATCC 43123 / DSM 2839 / NBRC 102507 / CH34</strain>
    </source>
</reference>
<comment type="function">
    <text evidence="1">Cell division inhibitor that blocks the formation of polar Z ring septums. Rapidly oscillates between the poles of the cell to destabilize FtsZ filaments that have formed before they mature into polar Z rings. Prevents FtsZ polymerization.</text>
</comment>
<comment type="subunit">
    <text evidence="1">Interacts with MinD and FtsZ.</text>
</comment>
<comment type="similarity">
    <text evidence="1">Belongs to the MinC family.</text>
</comment>